<protein>
    <recommendedName>
        <fullName evidence="1">Co-chaperonin GroES</fullName>
    </recommendedName>
    <alternativeName>
        <fullName evidence="1">10 kDa chaperonin</fullName>
    </alternativeName>
    <alternativeName>
        <fullName evidence="1">Chaperonin-10</fullName>
        <shortName evidence="1">Cpn10</shortName>
    </alternativeName>
</protein>
<feature type="chain" id="PRO_0000174694" description="Co-chaperonin GroES">
    <location>
        <begin position="1"/>
        <end position="94"/>
    </location>
</feature>
<comment type="function">
    <text evidence="1">Together with the chaperonin GroEL, plays an essential role in assisting protein folding. The GroEL-GroES system forms a nano-cage that allows encapsulation of the non-native substrate proteins and provides a physical environment optimized to promote and accelerate protein folding. GroES binds to the apical surface of the GroEL ring, thereby capping the opening of the GroEL channel.</text>
</comment>
<comment type="subunit">
    <text evidence="1">Heptamer of 7 subunits arranged in a ring. Interacts with the chaperonin GroEL.</text>
</comment>
<comment type="subcellular location">
    <subcellularLocation>
        <location evidence="1">Cytoplasm</location>
    </subcellularLocation>
</comment>
<comment type="similarity">
    <text evidence="1">Belongs to the GroES chaperonin family.</text>
</comment>
<keyword id="KW-0143">Chaperone</keyword>
<keyword id="KW-0963">Cytoplasm</keyword>
<organism>
    <name type="scientific">Bacillus thuringiensis subsp. konkukian (strain 97-27)</name>
    <dbReference type="NCBI Taxonomy" id="281309"/>
    <lineage>
        <taxon>Bacteria</taxon>
        <taxon>Bacillati</taxon>
        <taxon>Bacillota</taxon>
        <taxon>Bacilli</taxon>
        <taxon>Bacillales</taxon>
        <taxon>Bacillaceae</taxon>
        <taxon>Bacillus</taxon>
        <taxon>Bacillus cereus group</taxon>
    </lineage>
</organism>
<name>CH10_BACHK</name>
<evidence type="ECO:0000255" key="1">
    <source>
        <dbReference type="HAMAP-Rule" id="MF_00580"/>
    </source>
</evidence>
<reference key="1">
    <citation type="journal article" date="2006" name="J. Bacteriol.">
        <title>Pathogenomic sequence analysis of Bacillus cereus and Bacillus thuringiensis isolates closely related to Bacillus anthracis.</title>
        <authorList>
            <person name="Han C.S."/>
            <person name="Xie G."/>
            <person name="Challacombe J.F."/>
            <person name="Altherr M.R."/>
            <person name="Bhotika S.S."/>
            <person name="Bruce D."/>
            <person name="Campbell C.S."/>
            <person name="Campbell M.L."/>
            <person name="Chen J."/>
            <person name="Chertkov O."/>
            <person name="Cleland C."/>
            <person name="Dimitrijevic M."/>
            <person name="Doggett N.A."/>
            <person name="Fawcett J.J."/>
            <person name="Glavina T."/>
            <person name="Goodwin L.A."/>
            <person name="Hill K.K."/>
            <person name="Hitchcock P."/>
            <person name="Jackson P.J."/>
            <person name="Keim P."/>
            <person name="Kewalramani A.R."/>
            <person name="Longmire J."/>
            <person name="Lucas S."/>
            <person name="Malfatti S."/>
            <person name="McMurry K."/>
            <person name="Meincke L.J."/>
            <person name="Misra M."/>
            <person name="Moseman B.L."/>
            <person name="Mundt M."/>
            <person name="Munk A.C."/>
            <person name="Okinaka R.T."/>
            <person name="Parson-Quintana B."/>
            <person name="Reilly L.P."/>
            <person name="Richardson P."/>
            <person name="Robinson D.L."/>
            <person name="Rubin E."/>
            <person name="Saunders E."/>
            <person name="Tapia R."/>
            <person name="Tesmer J.G."/>
            <person name="Thayer N."/>
            <person name="Thompson L.S."/>
            <person name="Tice H."/>
            <person name="Ticknor L.O."/>
            <person name="Wills P.L."/>
            <person name="Brettin T.S."/>
            <person name="Gilna P."/>
        </authorList>
    </citation>
    <scope>NUCLEOTIDE SEQUENCE [LARGE SCALE GENOMIC DNA]</scope>
    <source>
        <strain>97-27</strain>
    </source>
</reference>
<accession>Q6HPC8</accession>
<sequence length="94" mass="10070">MLKPLGDRVVIELVQAEEKTASGIVLPDTAKEKPQEGKVIAVGTGRVLENGERVALEVAAGDLIIFSKYAGTEVKYEGTDYLILRESDILAVIG</sequence>
<gene>
    <name evidence="1" type="primary">groES</name>
    <name evidence="1" type="synonym">groS</name>
    <name type="ordered locus">BT9727_0238</name>
</gene>
<dbReference type="EMBL" id="AE017355">
    <property type="protein sequence ID" value="AAT60075.1"/>
    <property type="molecule type" value="Genomic_DNA"/>
</dbReference>
<dbReference type="RefSeq" id="WP_000917306.1">
    <property type="nucleotide sequence ID" value="NC_005957.1"/>
</dbReference>
<dbReference type="RefSeq" id="YP_034592.1">
    <property type="nucleotide sequence ID" value="NC_005957.1"/>
</dbReference>
<dbReference type="SMR" id="Q6HPC8"/>
<dbReference type="GeneID" id="93010771"/>
<dbReference type="KEGG" id="btk:BT9727_0238"/>
<dbReference type="PATRIC" id="fig|281309.8.peg.254"/>
<dbReference type="HOGENOM" id="CLU_132825_2_0_9"/>
<dbReference type="PRO" id="PR:Q6HPC8"/>
<dbReference type="Proteomes" id="UP000001301">
    <property type="component" value="Chromosome"/>
</dbReference>
<dbReference type="GO" id="GO:0005737">
    <property type="term" value="C:cytoplasm"/>
    <property type="evidence" value="ECO:0007669"/>
    <property type="project" value="UniProtKB-SubCell"/>
</dbReference>
<dbReference type="GO" id="GO:0005524">
    <property type="term" value="F:ATP binding"/>
    <property type="evidence" value="ECO:0007669"/>
    <property type="project" value="InterPro"/>
</dbReference>
<dbReference type="GO" id="GO:0046872">
    <property type="term" value="F:metal ion binding"/>
    <property type="evidence" value="ECO:0007669"/>
    <property type="project" value="TreeGrafter"/>
</dbReference>
<dbReference type="GO" id="GO:0044183">
    <property type="term" value="F:protein folding chaperone"/>
    <property type="evidence" value="ECO:0007669"/>
    <property type="project" value="InterPro"/>
</dbReference>
<dbReference type="GO" id="GO:0051087">
    <property type="term" value="F:protein-folding chaperone binding"/>
    <property type="evidence" value="ECO:0007669"/>
    <property type="project" value="TreeGrafter"/>
</dbReference>
<dbReference type="GO" id="GO:0051082">
    <property type="term" value="F:unfolded protein binding"/>
    <property type="evidence" value="ECO:0007669"/>
    <property type="project" value="TreeGrafter"/>
</dbReference>
<dbReference type="GO" id="GO:0051085">
    <property type="term" value="P:chaperone cofactor-dependent protein refolding"/>
    <property type="evidence" value="ECO:0007669"/>
    <property type="project" value="TreeGrafter"/>
</dbReference>
<dbReference type="CDD" id="cd00320">
    <property type="entry name" value="cpn10"/>
    <property type="match status" value="1"/>
</dbReference>
<dbReference type="FunFam" id="2.30.33.40:FF:000001">
    <property type="entry name" value="10 kDa chaperonin"/>
    <property type="match status" value="1"/>
</dbReference>
<dbReference type="Gene3D" id="2.30.33.40">
    <property type="entry name" value="GroES chaperonin"/>
    <property type="match status" value="1"/>
</dbReference>
<dbReference type="HAMAP" id="MF_00580">
    <property type="entry name" value="CH10"/>
    <property type="match status" value="1"/>
</dbReference>
<dbReference type="InterPro" id="IPR020818">
    <property type="entry name" value="Chaperonin_GroES"/>
</dbReference>
<dbReference type="InterPro" id="IPR037124">
    <property type="entry name" value="Chaperonin_GroES_sf"/>
</dbReference>
<dbReference type="InterPro" id="IPR018369">
    <property type="entry name" value="Chaprnonin_Cpn10_CS"/>
</dbReference>
<dbReference type="InterPro" id="IPR011032">
    <property type="entry name" value="GroES-like_sf"/>
</dbReference>
<dbReference type="NCBIfam" id="NF001527">
    <property type="entry name" value="PRK00364.1-2"/>
    <property type="match status" value="1"/>
</dbReference>
<dbReference type="NCBIfam" id="NF001530">
    <property type="entry name" value="PRK00364.1-6"/>
    <property type="match status" value="1"/>
</dbReference>
<dbReference type="NCBIfam" id="NF001531">
    <property type="entry name" value="PRK00364.2-2"/>
    <property type="match status" value="1"/>
</dbReference>
<dbReference type="NCBIfam" id="NF001533">
    <property type="entry name" value="PRK00364.2-4"/>
    <property type="match status" value="1"/>
</dbReference>
<dbReference type="NCBIfam" id="NF001534">
    <property type="entry name" value="PRK00364.2-5"/>
    <property type="match status" value="1"/>
</dbReference>
<dbReference type="PANTHER" id="PTHR10772">
    <property type="entry name" value="10 KDA HEAT SHOCK PROTEIN"/>
    <property type="match status" value="1"/>
</dbReference>
<dbReference type="PANTHER" id="PTHR10772:SF58">
    <property type="entry name" value="CO-CHAPERONIN GROES"/>
    <property type="match status" value="1"/>
</dbReference>
<dbReference type="Pfam" id="PF00166">
    <property type="entry name" value="Cpn10"/>
    <property type="match status" value="1"/>
</dbReference>
<dbReference type="PRINTS" id="PR00297">
    <property type="entry name" value="CHAPERONIN10"/>
</dbReference>
<dbReference type="SMART" id="SM00883">
    <property type="entry name" value="Cpn10"/>
    <property type="match status" value="1"/>
</dbReference>
<dbReference type="SUPFAM" id="SSF50129">
    <property type="entry name" value="GroES-like"/>
    <property type="match status" value="1"/>
</dbReference>
<dbReference type="PROSITE" id="PS00681">
    <property type="entry name" value="CHAPERONINS_CPN10"/>
    <property type="match status" value="1"/>
</dbReference>
<proteinExistence type="inferred from homology"/>